<reference key="1">
    <citation type="journal article" date="2006" name="BMC Biol.">
        <title>The complete chloroplast DNA sequence of the green alga Oltmannsiellopsis viridis reveals a distinctive quadripartite architecture in the chloroplast genome of early diverging ulvophytes.</title>
        <authorList>
            <person name="Pombert J.-F."/>
            <person name="Lemieux C."/>
            <person name="Turmel M."/>
        </authorList>
    </citation>
    <scope>NUCLEOTIDE SEQUENCE [LARGE SCALE GENOMIC DNA]</scope>
</reference>
<name>RK36_OLTVI</name>
<protein>
    <recommendedName>
        <fullName evidence="1">Large ribosomal subunit protein bL36c</fullName>
    </recommendedName>
    <alternativeName>
        <fullName evidence="2">50S ribosomal protein L36, chloroplastic</fullName>
    </alternativeName>
</protein>
<evidence type="ECO:0000255" key="1">
    <source>
        <dbReference type="HAMAP-Rule" id="MF_00251"/>
    </source>
</evidence>
<evidence type="ECO:0000305" key="2"/>
<accession>Q20F04</accession>
<dbReference type="EMBL" id="DQ291132">
    <property type="protein sequence ID" value="ABB82002.1"/>
    <property type="molecule type" value="Genomic_DNA"/>
</dbReference>
<dbReference type="RefSeq" id="YP_635841.1">
    <property type="nucleotide sequence ID" value="NC_008099.1"/>
</dbReference>
<dbReference type="SMR" id="Q20F04"/>
<dbReference type="GeneID" id="4100178"/>
<dbReference type="GO" id="GO:0009507">
    <property type="term" value="C:chloroplast"/>
    <property type="evidence" value="ECO:0007669"/>
    <property type="project" value="UniProtKB-SubCell"/>
</dbReference>
<dbReference type="GO" id="GO:1990904">
    <property type="term" value="C:ribonucleoprotein complex"/>
    <property type="evidence" value="ECO:0007669"/>
    <property type="project" value="UniProtKB-KW"/>
</dbReference>
<dbReference type="GO" id="GO:0005840">
    <property type="term" value="C:ribosome"/>
    <property type="evidence" value="ECO:0007669"/>
    <property type="project" value="UniProtKB-KW"/>
</dbReference>
<dbReference type="GO" id="GO:0003735">
    <property type="term" value="F:structural constituent of ribosome"/>
    <property type="evidence" value="ECO:0007669"/>
    <property type="project" value="InterPro"/>
</dbReference>
<dbReference type="GO" id="GO:0006412">
    <property type="term" value="P:translation"/>
    <property type="evidence" value="ECO:0007669"/>
    <property type="project" value="UniProtKB-UniRule"/>
</dbReference>
<dbReference type="HAMAP" id="MF_00251">
    <property type="entry name" value="Ribosomal_bL36"/>
    <property type="match status" value="1"/>
</dbReference>
<dbReference type="InterPro" id="IPR000473">
    <property type="entry name" value="Ribosomal_bL36"/>
</dbReference>
<dbReference type="InterPro" id="IPR035977">
    <property type="entry name" value="Ribosomal_bL36_sp"/>
</dbReference>
<dbReference type="NCBIfam" id="TIGR01022">
    <property type="entry name" value="rpmJ_bact"/>
    <property type="match status" value="1"/>
</dbReference>
<dbReference type="PANTHER" id="PTHR42888">
    <property type="entry name" value="50S RIBOSOMAL PROTEIN L36, CHLOROPLASTIC"/>
    <property type="match status" value="1"/>
</dbReference>
<dbReference type="PANTHER" id="PTHR42888:SF1">
    <property type="entry name" value="LARGE RIBOSOMAL SUBUNIT PROTEIN BL36C"/>
    <property type="match status" value="1"/>
</dbReference>
<dbReference type="Pfam" id="PF00444">
    <property type="entry name" value="Ribosomal_L36"/>
    <property type="match status" value="1"/>
</dbReference>
<dbReference type="SUPFAM" id="SSF57840">
    <property type="entry name" value="Ribosomal protein L36"/>
    <property type="match status" value="1"/>
</dbReference>
<dbReference type="PROSITE" id="PS00828">
    <property type="entry name" value="RIBOSOMAL_L36"/>
    <property type="match status" value="1"/>
</dbReference>
<proteinExistence type="inferred from homology"/>
<sequence>MKVRASVRKICKDCRLIRRKRRVMVICSNPKHKQRQG</sequence>
<keyword id="KW-0150">Chloroplast</keyword>
<keyword id="KW-0934">Plastid</keyword>
<keyword id="KW-0687">Ribonucleoprotein</keyword>
<keyword id="KW-0689">Ribosomal protein</keyword>
<comment type="subcellular location">
    <subcellularLocation>
        <location>Plastid</location>
        <location>Chloroplast</location>
    </subcellularLocation>
</comment>
<comment type="similarity">
    <text evidence="1">Belongs to the bacterial ribosomal protein bL36 family.</text>
</comment>
<gene>
    <name evidence="1" type="primary">rpl36</name>
</gene>
<organism>
    <name type="scientific">Oltmannsiellopsis viridis</name>
    <name type="common">Marine flagellate</name>
    <name type="synonym">Oltmannsiella viridis</name>
    <dbReference type="NCBI Taxonomy" id="51324"/>
    <lineage>
        <taxon>Eukaryota</taxon>
        <taxon>Viridiplantae</taxon>
        <taxon>Chlorophyta</taxon>
        <taxon>Ulvophyceae</taxon>
        <taxon>Oltmannsiellopsidales</taxon>
        <taxon>Oltmannsiellopsidaceae</taxon>
        <taxon>Oltmannsiellopsis</taxon>
    </lineage>
</organism>
<feature type="chain" id="PRO_0000276826" description="Large ribosomal subunit protein bL36c">
    <location>
        <begin position="1"/>
        <end position="37"/>
    </location>
</feature>
<geneLocation type="chloroplast"/>